<name>COAX_HALHL</name>
<proteinExistence type="inferred from homology"/>
<dbReference type="EC" id="2.7.1.33" evidence="1"/>
<dbReference type="EMBL" id="CP000544">
    <property type="protein sequence ID" value="ABM61650.1"/>
    <property type="molecule type" value="Genomic_DNA"/>
</dbReference>
<dbReference type="RefSeq" id="WP_011813673.1">
    <property type="nucleotide sequence ID" value="NC_008789.1"/>
</dbReference>
<dbReference type="SMR" id="A1WVD8"/>
<dbReference type="STRING" id="349124.Hhal_0874"/>
<dbReference type="KEGG" id="hha:Hhal_0874"/>
<dbReference type="eggNOG" id="COG1521">
    <property type="taxonomic scope" value="Bacteria"/>
</dbReference>
<dbReference type="HOGENOM" id="CLU_066627_0_0_6"/>
<dbReference type="OrthoDB" id="9781305at2"/>
<dbReference type="UniPathway" id="UPA00241">
    <property type="reaction ID" value="UER00352"/>
</dbReference>
<dbReference type="Proteomes" id="UP000000647">
    <property type="component" value="Chromosome"/>
</dbReference>
<dbReference type="GO" id="GO:0005737">
    <property type="term" value="C:cytoplasm"/>
    <property type="evidence" value="ECO:0007669"/>
    <property type="project" value="UniProtKB-SubCell"/>
</dbReference>
<dbReference type="GO" id="GO:0005524">
    <property type="term" value="F:ATP binding"/>
    <property type="evidence" value="ECO:0007669"/>
    <property type="project" value="UniProtKB-UniRule"/>
</dbReference>
<dbReference type="GO" id="GO:0046872">
    <property type="term" value="F:metal ion binding"/>
    <property type="evidence" value="ECO:0007669"/>
    <property type="project" value="UniProtKB-KW"/>
</dbReference>
<dbReference type="GO" id="GO:0004594">
    <property type="term" value="F:pantothenate kinase activity"/>
    <property type="evidence" value="ECO:0007669"/>
    <property type="project" value="UniProtKB-UniRule"/>
</dbReference>
<dbReference type="GO" id="GO:0015937">
    <property type="term" value="P:coenzyme A biosynthetic process"/>
    <property type="evidence" value="ECO:0007669"/>
    <property type="project" value="UniProtKB-UniRule"/>
</dbReference>
<dbReference type="CDD" id="cd24015">
    <property type="entry name" value="ASKHA_NBD_PanK-III"/>
    <property type="match status" value="1"/>
</dbReference>
<dbReference type="Gene3D" id="3.30.420.40">
    <property type="match status" value="2"/>
</dbReference>
<dbReference type="HAMAP" id="MF_01274">
    <property type="entry name" value="Pantothen_kinase_3"/>
    <property type="match status" value="1"/>
</dbReference>
<dbReference type="InterPro" id="IPR043129">
    <property type="entry name" value="ATPase_NBD"/>
</dbReference>
<dbReference type="InterPro" id="IPR004619">
    <property type="entry name" value="Type_III_PanK"/>
</dbReference>
<dbReference type="NCBIfam" id="TIGR00671">
    <property type="entry name" value="baf"/>
    <property type="match status" value="1"/>
</dbReference>
<dbReference type="NCBIfam" id="NF009860">
    <property type="entry name" value="PRK13322.1-5"/>
    <property type="match status" value="1"/>
</dbReference>
<dbReference type="PANTHER" id="PTHR34265">
    <property type="entry name" value="TYPE III PANTOTHENATE KINASE"/>
    <property type="match status" value="1"/>
</dbReference>
<dbReference type="PANTHER" id="PTHR34265:SF1">
    <property type="entry name" value="TYPE III PANTOTHENATE KINASE"/>
    <property type="match status" value="1"/>
</dbReference>
<dbReference type="Pfam" id="PF03309">
    <property type="entry name" value="Pan_kinase"/>
    <property type="match status" value="1"/>
</dbReference>
<dbReference type="SUPFAM" id="SSF53067">
    <property type="entry name" value="Actin-like ATPase domain"/>
    <property type="match status" value="2"/>
</dbReference>
<gene>
    <name evidence="1" type="primary">coaX</name>
    <name type="ordered locus">Hhal_0874</name>
</gene>
<keyword id="KW-0067">ATP-binding</keyword>
<keyword id="KW-0173">Coenzyme A biosynthesis</keyword>
<keyword id="KW-0963">Cytoplasm</keyword>
<keyword id="KW-0418">Kinase</keyword>
<keyword id="KW-0479">Metal-binding</keyword>
<keyword id="KW-0547">Nucleotide-binding</keyword>
<keyword id="KW-0630">Potassium</keyword>
<keyword id="KW-1185">Reference proteome</keyword>
<keyword id="KW-0808">Transferase</keyword>
<sequence length="254" mass="25587">MRLLLDLGNSAIKWAVVPPGGAAWQTGRLAYADGAGPEDTAAALGGRIPSTVAPARICVASVLAPAWQRRFDTALERAWGGPVQHLVASAAAAGVTNGYDQPEQLGVDRWAALIGARAVAPEGACIVDVGTAITVDGLDADGRHLGGAIFPGARLLHQALARGTARLPDSPIGAAALPARSTEEGIAAGVAVGAGAAVTALADAILAACPPGAQRLITGGGGGELAAGLSPAWCHRPYLVLEGLLHWSRHEARR</sequence>
<organism>
    <name type="scientific">Halorhodospira halophila (strain DSM 244 / SL1)</name>
    <name type="common">Ectothiorhodospira halophila (strain DSM 244 / SL1)</name>
    <dbReference type="NCBI Taxonomy" id="349124"/>
    <lineage>
        <taxon>Bacteria</taxon>
        <taxon>Pseudomonadati</taxon>
        <taxon>Pseudomonadota</taxon>
        <taxon>Gammaproteobacteria</taxon>
        <taxon>Chromatiales</taxon>
        <taxon>Ectothiorhodospiraceae</taxon>
        <taxon>Halorhodospira</taxon>
    </lineage>
</organism>
<feature type="chain" id="PRO_1000054379" description="Type III pantothenate kinase">
    <location>
        <begin position="1"/>
        <end position="254"/>
    </location>
</feature>
<feature type="active site" description="Proton acceptor" evidence="1">
    <location>
        <position position="108"/>
    </location>
</feature>
<feature type="binding site" evidence="1">
    <location>
        <begin position="6"/>
        <end position="13"/>
    </location>
    <ligand>
        <name>ATP</name>
        <dbReference type="ChEBI" id="CHEBI:30616"/>
    </ligand>
</feature>
<feature type="binding site" evidence="1">
    <location>
        <position position="99"/>
    </location>
    <ligand>
        <name>substrate</name>
    </ligand>
</feature>
<feature type="binding site" evidence="1">
    <location>
        <begin position="106"/>
        <end position="109"/>
    </location>
    <ligand>
        <name>substrate</name>
    </ligand>
</feature>
<feature type="binding site" evidence="1">
    <location>
        <position position="128"/>
    </location>
    <ligand>
        <name>K(+)</name>
        <dbReference type="ChEBI" id="CHEBI:29103"/>
    </ligand>
</feature>
<feature type="binding site" evidence="1">
    <location>
        <position position="131"/>
    </location>
    <ligand>
        <name>ATP</name>
        <dbReference type="ChEBI" id="CHEBI:30616"/>
    </ligand>
</feature>
<feature type="binding site" evidence="1">
    <location>
        <position position="182"/>
    </location>
    <ligand>
        <name>substrate</name>
    </ligand>
</feature>
<reference key="1">
    <citation type="submission" date="2006-12" db="EMBL/GenBank/DDBJ databases">
        <title>Complete sequence of Halorhodospira halophila SL1.</title>
        <authorList>
            <consortium name="US DOE Joint Genome Institute"/>
            <person name="Copeland A."/>
            <person name="Lucas S."/>
            <person name="Lapidus A."/>
            <person name="Barry K."/>
            <person name="Detter J.C."/>
            <person name="Glavina del Rio T."/>
            <person name="Hammon N."/>
            <person name="Israni S."/>
            <person name="Dalin E."/>
            <person name="Tice H."/>
            <person name="Pitluck S."/>
            <person name="Saunders E."/>
            <person name="Brettin T."/>
            <person name="Bruce D."/>
            <person name="Han C."/>
            <person name="Tapia R."/>
            <person name="Schmutz J."/>
            <person name="Larimer F."/>
            <person name="Land M."/>
            <person name="Hauser L."/>
            <person name="Kyrpides N."/>
            <person name="Mikhailova N."/>
            <person name="Hoff W."/>
            <person name="Richardson P."/>
        </authorList>
    </citation>
    <scope>NUCLEOTIDE SEQUENCE [LARGE SCALE GENOMIC DNA]</scope>
    <source>
        <strain>DSM 244 / SL1</strain>
    </source>
</reference>
<protein>
    <recommendedName>
        <fullName evidence="1">Type III pantothenate kinase</fullName>
        <ecNumber evidence="1">2.7.1.33</ecNumber>
    </recommendedName>
    <alternativeName>
        <fullName evidence="1">PanK-III</fullName>
    </alternativeName>
    <alternativeName>
        <fullName evidence="1">Pantothenic acid kinase</fullName>
    </alternativeName>
</protein>
<comment type="function">
    <text evidence="1">Catalyzes the phosphorylation of pantothenate (Pan), the first step in CoA biosynthesis.</text>
</comment>
<comment type="catalytic activity">
    <reaction evidence="1">
        <text>(R)-pantothenate + ATP = (R)-4'-phosphopantothenate + ADP + H(+)</text>
        <dbReference type="Rhea" id="RHEA:16373"/>
        <dbReference type="ChEBI" id="CHEBI:10986"/>
        <dbReference type="ChEBI" id="CHEBI:15378"/>
        <dbReference type="ChEBI" id="CHEBI:29032"/>
        <dbReference type="ChEBI" id="CHEBI:30616"/>
        <dbReference type="ChEBI" id="CHEBI:456216"/>
        <dbReference type="EC" id="2.7.1.33"/>
    </reaction>
</comment>
<comment type="cofactor">
    <cofactor evidence="1">
        <name>NH4(+)</name>
        <dbReference type="ChEBI" id="CHEBI:28938"/>
    </cofactor>
    <cofactor evidence="1">
        <name>K(+)</name>
        <dbReference type="ChEBI" id="CHEBI:29103"/>
    </cofactor>
    <text evidence="1">A monovalent cation. Ammonium or potassium.</text>
</comment>
<comment type="pathway">
    <text evidence="1">Cofactor biosynthesis; coenzyme A biosynthesis; CoA from (R)-pantothenate: step 1/5.</text>
</comment>
<comment type="subunit">
    <text evidence="1">Homodimer.</text>
</comment>
<comment type="subcellular location">
    <subcellularLocation>
        <location evidence="1">Cytoplasm</location>
    </subcellularLocation>
</comment>
<comment type="similarity">
    <text evidence="1">Belongs to the type III pantothenate kinase family.</text>
</comment>
<accession>A1WVD8</accession>
<evidence type="ECO:0000255" key="1">
    <source>
        <dbReference type="HAMAP-Rule" id="MF_01274"/>
    </source>
</evidence>